<dbReference type="EC" id="2.4.2.18" evidence="1"/>
<dbReference type="EMBL" id="CP000686">
    <property type="protein sequence ID" value="ABQ89848.1"/>
    <property type="molecule type" value="Genomic_DNA"/>
</dbReference>
<dbReference type="RefSeq" id="WP_011956199.1">
    <property type="nucleotide sequence ID" value="NC_009523.1"/>
</dbReference>
<dbReference type="SMR" id="A5UT95"/>
<dbReference type="STRING" id="357808.RoseRS_1452"/>
<dbReference type="KEGG" id="rrs:RoseRS_1452"/>
<dbReference type="eggNOG" id="COG0547">
    <property type="taxonomic scope" value="Bacteria"/>
</dbReference>
<dbReference type="HOGENOM" id="CLU_034315_2_1_0"/>
<dbReference type="OrthoDB" id="9806430at2"/>
<dbReference type="UniPathway" id="UPA00035">
    <property type="reaction ID" value="UER00041"/>
</dbReference>
<dbReference type="Proteomes" id="UP000006554">
    <property type="component" value="Chromosome"/>
</dbReference>
<dbReference type="GO" id="GO:0005829">
    <property type="term" value="C:cytosol"/>
    <property type="evidence" value="ECO:0007669"/>
    <property type="project" value="TreeGrafter"/>
</dbReference>
<dbReference type="GO" id="GO:0004048">
    <property type="term" value="F:anthranilate phosphoribosyltransferase activity"/>
    <property type="evidence" value="ECO:0007669"/>
    <property type="project" value="UniProtKB-UniRule"/>
</dbReference>
<dbReference type="GO" id="GO:0000287">
    <property type="term" value="F:magnesium ion binding"/>
    <property type="evidence" value="ECO:0007669"/>
    <property type="project" value="UniProtKB-UniRule"/>
</dbReference>
<dbReference type="GO" id="GO:0000162">
    <property type="term" value="P:L-tryptophan biosynthetic process"/>
    <property type="evidence" value="ECO:0007669"/>
    <property type="project" value="UniProtKB-UniRule"/>
</dbReference>
<dbReference type="FunFam" id="3.40.1030.10:FF:000002">
    <property type="entry name" value="Anthranilate phosphoribosyltransferase"/>
    <property type="match status" value="1"/>
</dbReference>
<dbReference type="Gene3D" id="3.40.1030.10">
    <property type="entry name" value="Nucleoside phosphorylase/phosphoribosyltransferase catalytic domain"/>
    <property type="match status" value="1"/>
</dbReference>
<dbReference type="Gene3D" id="1.20.970.10">
    <property type="entry name" value="Transferase, Pyrimidine Nucleoside Phosphorylase, Chain C"/>
    <property type="match status" value="1"/>
</dbReference>
<dbReference type="HAMAP" id="MF_00211">
    <property type="entry name" value="TrpD"/>
    <property type="match status" value="1"/>
</dbReference>
<dbReference type="InterPro" id="IPR005940">
    <property type="entry name" value="Anthranilate_Pribosyl_Tfrase"/>
</dbReference>
<dbReference type="InterPro" id="IPR000312">
    <property type="entry name" value="Glycosyl_Trfase_fam3"/>
</dbReference>
<dbReference type="InterPro" id="IPR017459">
    <property type="entry name" value="Glycosyl_Trfase_fam3_N_dom"/>
</dbReference>
<dbReference type="InterPro" id="IPR036320">
    <property type="entry name" value="Glycosyl_Trfase_fam3_N_dom_sf"/>
</dbReference>
<dbReference type="InterPro" id="IPR035902">
    <property type="entry name" value="Nuc_phospho_transferase"/>
</dbReference>
<dbReference type="NCBIfam" id="TIGR01245">
    <property type="entry name" value="trpD"/>
    <property type="match status" value="1"/>
</dbReference>
<dbReference type="PANTHER" id="PTHR43285">
    <property type="entry name" value="ANTHRANILATE PHOSPHORIBOSYLTRANSFERASE"/>
    <property type="match status" value="1"/>
</dbReference>
<dbReference type="PANTHER" id="PTHR43285:SF2">
    <property type="entry name" value="ANTHRANILATE PHOSPHORIBOSYLTRANSFERASE"/>
    <property type="match status" value="1"/>
</dbReference>
<dbReference type="Pfam" id="PF02885">
    <property type="entry name" value="Glycos_trans_3N"/>
    <property type="match status" value="1"/>
</dbReference>
<dbReference type="Pfam" id="PF00591">
    <property type="entry name" value="Glycos_transf_3"/>
    <property type="match status" value="1"/>
</dbReference>
<dbReference type="SUPFAM" id="SSF52418">
    <property type="entry name" value="Nucleoside phosphorylase/phosphoribosyltransferase catalytic domain"/>
    <property type="match status" value="1"/>
</dbReference>
<dbReference type="SUPFAM" id="SSF47648">
    <property type="entry name" value="Nucleoside phosphorylase/phosphoribosyltransferase N-terminal domain"/>
    <property type="match status" value="1"/>
</dbReference>
<organism>
    <name type="scientific">Roseiflexus sp. (strain RS-1)</name>
    <dbReference type="NCBI Taxonomy" id="357808"/>
    <lineage>
        <taxon>Bacteria</taxon>
        <taxon>Bacillati</taxon>
        <taxon>Chloroflexota</taxon>
        <taxon>Chloroflexia</taxon>
        <taxon>Chloroflexales</taxon>
        <taxon>Roseiflexineae</taxon>
        <taxon>Roseiflexaceae</taxon>
        <taxon>Roseiflexus</taxon>
    </lineage>
</organism>
<keyword id="KW-0028">Amino-acid biosynthesis</keyword>
<keyword id="KW-0057">Aromatic amino acid biosynthesis</keyword>
<keyword id="KW-0328">Glycosyltransferase</keyword>
<keyword id="KW-0460">Magnesium</keyword>
<keyword id="KW-0479">Metal-binding</keyword>
<keyword id="KW-0808">Transferase</keyword>
<keyword id="KW-0822">Tryptophan biosynthesis</keyword>
<sequence length="341" mass="35411">MPIRDQIIQIVRGHDLSEDQAAEAMEEIMTGMATPAQVAALLTALHLKGETDAEIAGMARVMRAKAIPVHFDAPLLDTCGTGGDGAGTFNISTTAAFIAAGAGAIVAKHGNRAMSSVCGSADVLEGLGVNIELDAASVARCLDQAGIGFMFAQKFHPAMRFVGPVRREIGIRTVFNILGPLSNPAHARHQVLGVADPALAEKMARALHLLGTQHALVIHGHGGLDELTLSGPNLVIDVRAGHTPRRYEVTAADLGLAPAPREALRGGDVSVNVAIVRGILSGEDQSARRDVALLNAAAALVAADRAADLRDGLHQARHSLESGAALARLERLITVSRGGEG</sequence>
<accession>A5UT95</accession>
<evidence type="ECO:0000255" key="1">
    <source>
        <dbReference type="HAMAP-Rule" id="MF_00211"/>
    </source>
</evidence>
<gene>
    <name evidence="1" type="primary">trpD</name>
    <name type="ordered locus">RoseRS_1452</name>
</gene>
<reference key="1">
    <citation type="submission" date="2007-04" db="EMBL/GenBank/DDBJ databases">
        <title>Complete sequence of Roseiflexus sp. RS-1.</title>
        <authorList>
            <consortium name="US DOE Joint Genome Institute"/>
            <person name="Copeland A."/>
            <person name="Lucas S."/>
            <person name="Lapidus A."/>
            <person name="Barry K."/>
            <person name="Detter J.C."/>
            <person name="Glavina del Rio T."/>
            <person name="Hammon N."/>
            <person name="Israni S."/>
            <person name="Dalin E."/>
            <person name="Tice H."/>
            <person name="Pitluck S."/>
            <person name="Chertkov O."/>
            <person name="Brettin T."/>
            <person name="Bruce D."/>
            <person name="Han C."/>
            <person name="Schmutz J."/>
            <person name="Larimer F."/>
            <person name="Land M."/>
            <person name="Hauser L."/>
            <person name="Kyrpides N."/>
            <person name="Mikhailova N."/>
            <person name="Bryant D.A."/>
            <person name="Richardson P."/>
        </authorList>
    </citation>
    <scope>NUCLEOTIDE SEQUENCE [LARGE SCALE GENOMIC DNA]</scope>
    <source>
        <strain>RS-1</strain>
    </source>
</reference>
<comment type="function">
    <text evidence="1">Catalyzes the transfer of the phosphoribosyl group of 5-phosphorylribose-1-pyrophosphate (PRPP) to anthranilate to yield N-(5'-phosphoribosyl)-anthranilate (PRA).</text>
</comment>
<comment type="catalytic activity">
    <reaction evidence="1">
        <text>N-(5-phospho-beta-D-ribosyl)anthranilate + diphosphate = 5-phospho-alpha-D-ribose 1-diphosphate + anthranilate</text>
        <dbReference type="Rhea" id="RHEA:11768"/>
        <dbReference type="ChEBI" id="CHEBI:16567"/>
        <dbReference type="ChEBI" id="CHEBI:18277"/>
        <dbReference type="ChEBI" id="CHEBI:33019"/>
        <dbReference type="ChEBI" id="CHEBI:58017"/>
        <dbReference type="EC" id="2.4.2.18"/>
    </reaction>
</comment>
<comment type="cofactor">
    <cofactor evidence="1">
        <name>Mg(2+)</name>
        <dbReference type="ChEBI" id="CHEBI:18420"/>
    </cofactor>
    <text evidence="1">Binds 2 magnesium ions per monomer.</text>
</comment>
<comment type="pathway">
    <text evidence="1">Amino-acid biosynthesis; L-tryptophan biosynthesis; L-tryptophan from chorismate: step 2/5.</text>
</comment>
<comment type="subunit">
    <text evidence="1">Homodimer.</text>
</comment>
<comment type="similarity">
    <text evidence="1">Belongs to the anthranilate phosphoribosyltransferase family.</text>
</comment>
<protein>
    <recommendedName>
        <fullName evidence="1">Anthranilate phosphoribosyltransferase</fullName>
        <ecNumber evidence="1">2.4.2.18</ecNumber>
    </recommendedName>
</protein>
<name>TRPD_ROSS1</name>
<feature type="chain" id="PRO_1000058623" description="Anthranilate phosphoribosyltransferase">
    <location>
        <begin position="1"/>
        <end position="341"/>
    </location>
</feature>
<feature type="binding site" evidence="1">
    <location>
        <position position="80"/>
    </location>
    <ligand>
        <name>5-phospho-alpha-D-ribose 1-diphosphate</name>
        <dbReference type="ChEBI" id="CHEBI:58017"/>
    </ligand>
</feature>
<feature type="binding site" evidence="1">
    <location>
        <position position="80"/>
    </location>
    <ligand>
        <name>anthranilate</name>
        <dbReference type="ChEBI" id="CHEBI:16567"/>
        <label>1</label>
    </ligand>
</feature>
<feature type="binding site" evidence="1">
    <location>
        <begin position="83"/>
        <end position="84"/>
    </location>
    <ligand>
        <name>5-phospho-alpha-D-ribose 1-diphosphate</name>
        <dbReference type="ChEBI" id="CHEBI:58017"/>
    </ligand>
</feature>
<feature type="binding site" evidence="1">
    <location>
        <position position="88"/>
    </location>
    <ligand>
        <name>5-phospho-alpha-D-ribose 1-diphosphate</name>
        <dbReference type="ChEBI" id="CHEBI:58017"/>
    </ligand>
</feature>
<feature type="binding site" evidence="1">
    <location>
        <begin position="90"/>
        <end position="93"/>
    </location>
    <ligand>
        <name>5-phospho-alpha-D-ribose 1-diphosphate</name>
        <dbReference type="ChEBI" id="CHEBI:58017"/>
    </ligand>
</feature>
<feature type="binding site" evidence="1">
    <location>
        <position position="92"/>
    </location>
    <ligand>
        <name>Mg(2+)</name>
        <dbReference type="ChEBI" id="CHEBI:18420"/>
        <label>1</label>
    </ligand>
</feature>
<feature type="binding site" evidence="1">
    <location>
        <begin position="108"/>
        <end position="116"/>
    </location>
    <ligand>
        <name>5-phospho-alpha-D-ribose 1-diphosphate</name>
        <dbReference type="ChEBI" id="CHEBI:58017"/>
    </ligand>
</feature>
<feature type="binding site" evidence="1">
    <location>
        <position position="111"/>
    </location>
    <ligand>
        <name>anthranilate</name>
        <dbReference type="ChEBI" id="CHEBI:16567"/>
        <label>1</label>
    </ligand>
</feature>
<feature type="binding site" evidence="1">
    <location>
        <position position="120"/>
    </location>
    <ligand>
        <name>5-phospho-alpha-D-ribose 1-diphosphate</name>
        <dbReference type="ChEBI" id="CHEBI:58017"/>
    </ligand>
</feature>
<feature type="binding site" evidence="1">
    <location>
        <position position="166"/>
    </location>
    <ligand>
        <name>anthranilate</name>
        <dbReference type="ChEBI" id="CHEBI:16567"/>
        <label>2</label>
    </ligand>
</feature>
<feature type="binding site" evidence="1">
    <location>
        <position position="225"/>
    </location>
    <ligand>
        <name>Mg(2+)</name>
        <dbReference type="ChEBI" id="CHEBI:18420"/>
        <label>2</label>
    </ligand>
</feature>
<feature type="binding site" evidence="1">
    <location>
        <position position="226"/>
    </location>
    <ligand>
        <name>Mg(2+)</name>
        <dbReference type="ChEBI" id="CHEBI:18420"/>
        <label>1</label>
    </ligand>
</feature>
<feature type="binding site" evidence="1">
    <location>
        <position position="226"/>
    </location>
    <ligand>
        <name>Mg(2+)</name>
        <dbReference type="ChEBI" id="CHEBI:18420"/>
        <label>2</label>
    </ligand>
</feature>
<proteinExistence type="inferred from homology"/>